<organism>
    <name type="scientific">Duck hepatitis B virus (strain United States/DHBV-16)</name>
    <name type="common">DHBV</name>
    <dbReference type="NCBI Taxonomy" id="489543"/>
    <lineage>
        <taxon>Viruses</taxon>
        <taxon>Riboviria</taxon>
        <taxon>Pararnavirae</taxon>
        <taxon>Artverviricota</taxon>
        <taxon>Revtraviricetes</taxon>
        <taxon>Blubervirales</taxon>
        <taxon>Hepadnaviridae</taxon>
        <taxon>Avihepadnavirus</taxon>
        <taxon>Duck hepatitis B virus</taxon>
    </lineage>
</organism>
<keyword id="KW-0024">Alternative initiation</keyword>
<keyword id="KW-0945">Host-virus interaction</keyword>
<keyword id="KW-0964">Secreted</keyword>
<keyword id="KW-0732">Signal</keyword>
<keyword id="KW-0899">Viral immunoevasion</keyword>
<name>HBEAG_DHBV1</name>
<sequence>MWNLRITPLSFGAACQGIFTSTLLLSCVTVPLVCTIVYDSCLYMDINASRALANVYDLPDDFFPKIDDLVRDAKDALEPYWKSDSIKKHVLIATHFVDLIEDFWQTTQGMHEIAESLRAVIPPTTTPVPPGYLIQHEEAEEIPLGDLFKHQEERIVSFQPDYPITARIHAHLKAYAKINEESLDRARRLLWWHYNCLLWGEAQVTNYISRLRTWLSTPEKYRGRDAPTIEAITRPIQVAQGGRKTTTGTRKPRGLEPRRRKVKTTVVYGRRRSKSRERRAPTPQRAGSPLPRSSSSHHRSPSPRK</sequence>
<feature type="signal peptide" evidence="2">
    <location>
        <begin position="1"/>
        <end position="19"/>
    </location>
</feature>
<feature type="chain" id="PRO_0000222302" description="External core antigen">
    <location>
        <begin position="20"/>
        <end position="272"/>
    </location>
</feature>
<feature type="propeptide" id="PRO_0000324680" evidence="1">
    <location>
        <begin position="273"/>
        <end position="305"/>
    </location>
</feature>
<feature type="region of interest" description="Disordered" evidence="3">
    <location>
        <begin position="226"/>
        <end position="305"/>
    </location>
</feature>
<feature type="compositionally biased region" description="Basic residues" evidence="3">
    <location>
        <begin position="258"/>
        <end position="277"/>
    </location>
</feature>
<feature type="compositionally biased region" description="Basic residues" evidence="3">
    <location>
        <begin position="295"/>
        <end position="305"/>
    </location>
</feature>
<feature type="site" description="Cleavage; by host" evidence="1">
    <location>
        <begin position="272"/>
        <end position="273"/>
    </location>
</feature>
<reference key="1">
    <citation type="journal article" date="1984" name="J. Virol.">
        <title>Nucleotide sequence of a cloned duck hepatitis B virus genome: comparison with woodchuck and human hepatitis B virus sequences.</title>
        <authorList>
            <person name="Mandart E."/>
            <person name="Kay A."/>
            <person name="Galibert F."/>
        </authorList>
    </citation>
    <scope>NUCLEOTIDE SEQUENCE [GENOMIC DNA]</scope>
</reference>
<gene>
    <name type="primary">C</name>
</gene>
<dbReference type="EMBL" id="K01834">
    <property type="protein sequence ID" value="AAA45741.1"/>
    <property type="molecule type" value="Genomic_DNA"/>
</dbReference>
<dbReference type="PIR" id="A03716">
    <property type="entry name" value="NKVLD"/>
</dbReference>
<dbReference type="EMDB" id="EMD-10801"/>
<dbReference type="EMDB" id="EMD-10802"/>
<dbReference type="SMR" id="P03154"/>
<dbReference type="Proteomes" id="UP000180685">
    <property type="component" value="Genome"/>
</dbReference>
<dbReference type="GO" id="GO:0005576">
    <property type="term" value="C:extracellular region"/>
    <property type="evidence" value="ECO:0007669"/>
    <property type="project" value="UniProtKB-SubCell"/>
</dbReference>
<dbReference type="GO" id="GO:0005198">
    <property type="term" value="F:structural molecule activity"/>
    <property type="evidence" value="ECO:0007669"/>
    <property type="project" value="InterPro"/>
</dbReference>
<dbReference type="Gene3D" id="1.10.4090.10">
    <property type="entry name" value="Viral capsid, core domain supefamily, Hepatitis B virus"/>
    <property type="match status" value="2"/>
</dbReference>
<dbReference type="InterPro" id="IPR002006">
    <property type="entry name" value="Hepatitis_core"/>
</dbReference>
<dbReference type="InterPro" id="IPR036459">
    <property type="entry name" value="Viral_capsid_core_dom_sf_HBV"/>
</dbReference>
<dbReference type="Pfam" id="PF00906">
    <property type="entry name" value="Hepatitis_core"/>
    <property type="match status" value="1"/>
</dbReference>
<dbReference type="SUPFAM" id="SSF47852">
    <property type="entry name" value="Hepatitis B viral capsid (hbcag)"/>
    <property type="match status" value="1"/>
</dbReference>
<protein>
    <recommendedName>
        <fullName>External core antigen</fullName>
    </recommendedName>
    <alternativeName>
        <fullName>HBeAg</fullName>
    </alternativeName>
    <alternativeName>
        <fullName>Precore protein</fullName>
    </alternativeName>
</protein>
<accession>P03154</accession>
<organismHost>
    <name type="scientific">Anas</name>
    <name type="common">ducks</name>
    <dbReference type="NCBI Taxonomy" id="8835"/>
</organismHost>
<evidence type="ECO:0000250" key="1"/>
<evidence type="ECO:0000255" key="2"/>
<evidence type="ECO:0000256" key="3">
    <source>
        <dbReference type="SAM" id="MobiDB-lite"/>
    </source>
</evidence>
<evidence type="ECO:0000305" key="4"/>
<proteinExistence type="inferred from homology"/>
<comment type="function">
    <text evidence="1">May regulate immune response to the intracellular capsid in acting as a T-cell tolerogen, by having an immunoregulatory effect which prevents destruction of infected cells by cytotoxic T-cells.</text>
</comment>
<comment type="subunit">
    <text evidence="1">Homodimerizes.</text>
</comment>
<comment type="subcellular location">
    <subcellularLocation>
        <location evidence="1">Secreted</location>
    </subcellularLocation>
</comment>
<comment type="alternative products">
    <event type="alternative initiation"/>
    <isoform>
        <id>P03154-1</id>
        <name>External core antigen</name>
        <sequence type="displayed"/>
    </isoform>
    <isoform>
        <id>P0C6J7-1</id>
        <name>Capsid protein</name>
        <sequence type="external"/>
    </isoform>
</comment>
<comment type="similarity">
    <text evidence="4">Belongs to the avihepadnavirus precore antigen family.</text>
</comment>